<keyword id="KW-0479">Metal-binding</keyword>
<keyword id="KW-1185">Reference proteome</keyword>
<keyword id="KW-0862">Zinc</keyword>
<sequence length="57" mass="6345">MSAKCPICAKPVDSAFRPFCSKRCADVDLQRWLSGRYVVAGGDDDEENPPSQDINRE</sequence>
<name>YACG_CAUVC</name>
<protein>
    <recommendedName>
        <fullName evidence="1">DNA gyrase inhibitor YacG</fullName>
    </recommendedName>
</protein>
<feature type="chain" id="PRO_0000211693" description="DNA gyrase inhibitor YacG">
    <location>
        <begin position="1"/>
        <end position="57"/>
    </location>
</feature>
<feature type="binding site" evidence="1">
    <location>
        <position position="5"/>
    </location>
    <ligand>
        <name>Zn(2+)</name>
        <dbReference type="ChEBI" id="CHEBI:29105"/>
    </ligand>
</feature>
<feature type="binding site" evidence="1">
    <location>
        <position position="8"/>
    </location>
    <ligand>
        <name>Zn(2+)</name>
        <dbReference type="ChEBI" id="CHEBI:29105"/>
    </ligand>
</feature>
<feature type="binding site" evidence="1">
    <location>
        <position position="20"/>
    </location>
    <ligand>
        <name>Zn(2+)</name>
        <dbReference type="ChEBI" id="CHEBI:29105"/>
    </ligand>
</feature>
<feature type="binding site" evidence="1">
    <location>
        <position position="24"/>
    </location>
    <ligand>
        <name>Zn(2+)</name>
        <dbReference type="ChEBI" id="CHEBI:29105"/>
    </ligand>
</feature>
<reference key="1">
    <citation type="journal article" date="2001" name="Proc. Natl. Acad. Sci. U.S.A.">
        <title>Complete genome sequence of Caulobacter crescentus.</title>
        <authorList>
            <person name="Nierman W.C."/>
            <person name="Feldblyum T.V."/>
            <person name="Laub M.T."/>
            <person name="Paulsen I.T."/>
            <person name="Nelson K.E."/>
            <person name="Eisen J.A."/>
            <person name="Heidelberg J.F."/>
            <person name="Alley M.R.K."/>
            <person name="Ohta N."/>
            <person name="Maddock J.R."/>
            <person name="Potocka I."/>
            <person name="Nelson W.C."/>
            <person name="Newton A."/>
            <person name="Stephens C."/>
            <person name="Phadke N.D."/>
            <person name="Ely B."/>
            <person name="DeBoy R.T."/>
            <person name="Dodson R.J."/>
            <person name="Durkin A.S."/>
            <person name="Gwinn M.L."/>
            <person name="Haft D.H."/>
            <person name="Kolonay J.F."/>
            <person name="Smit J."/>
            <person name="Craven M.B."/>
            <person name="Khouri H.M."/>
            <person name="Shetty J."/>
            <person name="Berry K.J."/>
            <person name="Utterback T.R."/>
            <person name="Tran K."/>
            <person name="Wolf A.M."/>
            <person name="Vamathevan J.J."/>
            <person name="Ermolaeva M.D."/>
            <person name="White O."/>
            <person name="Salzberg S.L."/>
            <person name="Venter J.C."/>
            <person name="Shapiro L."/>
            <person name="Fraser C.M."/>
        </authorList>
    </citation>
    <scope>NUCLEOTIDE SEQUENCE [LARGE SCALE GENOMIC DNA]</scope>
    <source>
        <strain>ATCC 19089 / CIP 103742 / CB 15</strain>
    </source>
</reference>
<gene>
    <name evidence="1" type="primary">yacG</name>
    <name type="ordered locus">CC_2340</name>
</gene>
<comment type="function">
    <text evidence="1">Inhibits all the catalytic activities of DNA gyrase by preventing its interaction with DNA. Acts by binding directly to the C-terminal domain of GyrB, which probably disrupts DNA binding by the gyrase.</text>
</comment>
<comment type="cofactor">
    <cofactor evidence="1">
        <name>Zn(2+)</name>
        <dbReference type="ChEBI" id="CHEBI:29105"/>
    </cofactor>
    <text evidence="1">Binds 1 zinc ion.</text>
</comment>
<comment type="subunit">
    <text evidence="1">Interacts with GyrB.</text>
</comment>
<comment type="similarity">
    <text evidence="1">Belongs to the DNA gyrase inhibitor YacG family.</text>
</comment>
<dbReference type="EMBL" id="AE005673">
    <property type="protein sequence ID" value="AAK24311.1"/>
    <property type="molecule type" value="Genomic_DNA"/>
</dbReference>
<dbReference type="PIR" id="C87539">
    <property type="entry name" value="C87539"/>
</dbReference>
<dbReference type="RefSeq" id="NP_421143.1">
    <property type="nucleotide sequence ID" value="NC_002696.2"/>
</dbReference>
<dbReference type="RefSeq" id="WP_010920199.1">
    <property type="nucleotide sequence ID" value="NC_002696.2"/>
</dbReference>
<dbReference type="SMR" id="Q9A5V7"/>
<dbReference type="STRING" id="190650.CC_2340"/>
<dbReference type="EnsemblBacteria" id="AAK24311">
    <property type="protein sequence ID" value="AAK24311"/>
    <property type="gene ID" value="CC_2340"/>
</dbReference>
<dbReference type="KEGG" id="ccr:CC_2340"/>
<dbReference type="PATRIC" id="fig|190650.5.peg.2361"/>
<dbReference type="eggNOG" id="COG3024">
    <property type="taxonomic scope" value="Bacteria"/>
</dbReference>
<dbReference type="HOGENOM" id="CLU_178280_2_1_5"/>
<dbReference type="BioCyc" id="CAULO:CC2340-MONOMER"/>
<dbReference type="Proteomes" id="UP000001816">
    <property type="component" value="Chromosome"/>
</dbReference>
<dbReference type="GO" id="GO:0008657">
    <property type="term" value="F:DNA topoisomerase type II (double strand cut, ATP-hydrolyzing) inhibitor activity"/>
    <property type="evidence" value="ECO:0007669"/>
    <property type="project" value="UniProtKB-UniRule"/>
</dbReference>
<dbReference type="GO" id="GO:0008270">
    <property type="term" value="F:zinc ion binding"/>
    <property type="evidence" value="ECO:0007669"/>
    <property type="project" value="UniProtKB-UniRule"/>
</dbReference>
<dbReference type="GO" id="GO:0006355">
    <property type="term" value="P:regulation of DNA-templated transcription"/>
    <property type="evidence" value="ECO:0007669"/>
    <property type="project" value="InterPro"/>
</dbReference>
<dbReference type="Gene3D" id="3.30.50.10">
    <property type="entry name" value="Erythroid Transcription Factor GATA-1, subunit A"/>
    <property type="match status" value="1"/>
</dbReference>
<dbReference type="HAMAP" id="MF_00649">
    <property type="entry name" value="DNA_gyrase_inhibitor_YacG"/>
    <property type="match status" value="1"/>
</dbReference>
<dbReference type="InterPro" id="IPR005584">
    <property type="entry name" value="DNA_gyrase_inhibitor_YacG"/>
</dbReference>
<dbReference type="InterPro" id="IPR013088">
    <property type="entry name" value="Znf_NHR/GATA"/>
</dbReference>
<dbReference type="PANTHER" id="PTHR36150">
    <property type="entry name" value="DNA GYRASE INHIBITOR YACG"/>
    <property type="match status" value="1"/>
</dbReference>
<dbReference type="PANTHER" id="PTHR36150:SF1">
    <property type="entry name" value="DNA GYRASE INHIBITOR YACG"/>
    <property type="match status" value="1"/>
</dbReference>
<dbReference type="Pfam" id="PF03884">
    <property type="entry name" value="YacG"/>
    <property type="match status" value="1"/>
</dbReference>
<dbReference type="SUPFAM" id="SSF57716">
    <property type="entry name" value="Glucocorticoid receptor-like (DNA-binding domain)"/>
    <property type="match status" value="1"/>
</dbReference>
<evidence type="ECO:0000255" key="1">
    <source>
        <dbReference type="HAMAP-Rule" id="MF_00649"/>
    </source>
</evidence>
<accession>Q9A5V7</accession>
<proteinExistence type="inferred from homology"/>
<organism>
    <name type="scientific">Caulobacter vibrioides (strain ATCC 19089 / CIP 103742 / CB 15)</name>
    <name type="common">Caulobacter crescentus</name>
    <dbReference type="NCBI Taxonomy" id="190650"/>
    <lineage>
        <taxon>Bacteria</taxon>
        <taxon>Pseudomonadati</taxon>
        <taxon>Pseudomonadota</taxon>
        <taxon>Alphaproteobacteria</taxon>
        <taxon>Caulobacterales</taxon>
        <taxon>Caulobacteraceae</taxon>
        <taxon>Caulobacter</taxon>
    </lineage>
</organism>